<accession>Q9AET6</accession>
<evidence type="ECO:0000255" key="1">
    <source>
        <dbReference type="HAMAP-Rule" id="MF_01382"/>
    </source>
</evidence>
<evidence type="ECO:0000269" key="2">
    <source>
    </source>
</evidence>
<evidence type="ECO:0000269" key="3">
    <source>
    </source>
</evidence>
<evidence type="ECO:0000305" key="4"/>
<organism>
    <name type="scientific">Streptococcus gordonii</name>
    <dbReference type="NCBI Taxonomy" id="1302"/>
    <lineage>
        <taxon>Bacteria</taxon>
        <taxon>Bacillati</taxon>
        <taxon>Bacillota</taxon>
        <taxon>Bacilli</taxon>
        <taxon>Lactobacillales</taxon>
        <taxon>Streptococcaceae</taxon>
        <taxon>Streptococcus</taxon>
    </lineage>
</organism>
<dbReference type="EC" id="7.4.2.8" evidence="1"/>
<dbReference type="EMBL" id="AY028381">
    <property type="protein sequence ID" value="AAK17001.2"/>
    <property type="molecule type" value="Genomic_DNA"/>
</dbReference>
<dbReference type="RefSeq" id="WP_061598997.1">
    <property type="nucleotide sequence ID" value="NZ_JAHZQG010000004.1"/>
</dbReference>
<dbReference type="SMR" id="Q9AET6"/>
<dbReference type="TCDB" id="3.A.5.10.1">
    <property type="family name" value="the general secretory pathway (sec) family"/>
</dbReference>
<dbReference type="BRENDA" id="7.4.2.5">
    <property type="organism ID" value="5934"/>
</dbReference>
<dbReference type="GO" id="GO:0031522">
    <property type="term" value="C:cell envelope Sec protein transport complex"/>
    <property type="evidence" value="ECO:0007669"/>
    <property type="project" value="TreeGrafter"/>
</dbReference>
<dbReference type="GO" id="GO:0005829">
    <property type="term" value="C:cytosol"/>
    <property type="evidence" value="ECO:0007669"/>
    <property type="project" value="TreeGrafter"/>
</dbReference>
<dbReference type="GO" id="GO:0005886">
    <property type="term" value="C:plasma membrane"/>
    <property type="evidence" value="ECO:0007669"/>
    <property type="project" value="UniProtKB-SubCell"/>
</dbReference>
<dbReference type="GO" id="GO:0005524">
    <property type="term" value="F:ATP binding"/>
    <property type="evidence" value="ECO:0007669"/>
    <property type="project" value="UniProtKB-UniRule"/>
</dbReference>
<dbReference type="GO" id="GO:0008564">
    <property type="term" value="F:protein-exporting ATPase activity"/>
    <property type="evidence" value="ECO:0007669"/>
    <property type="project" value="UniProtKB-EC"/>
</dbReference>
<dbReference type="GO" id="GO:0065002">
    <property type="term" value="P:intracellular protein transmembrane transport"/>
    <property type="evidence" value="ECO:0007669"/>
    <property type="project" value="UniProtKB-UniRule"/>
</dbReference>
<dbReference type="GO" id="GO:0017038">
    <property type="term" value="P:protein import"/>
    <property type="evidence" value="ECO:0007669"/>
    <property type="project" value="InterPro"/>
</dbReference>
<dbReference type="GO" id="GO:0006605">
    <property type="term" value="P:protein targeting"/>
    <property type="evidence" value="ECO:0007669"/>
    <property type="project" value="UniProtKB-UniRule"/>
</dbReference>
<dbReference type="GO" id="GO:0043952">
    <property type="term" value="P:protein transport by the Sec complex"/>
    <property type="evidence" value="ECO:0007669"/>
    <property type="project" value="TreeGrafter"/>
</dbReference>
<dbReference type="CDD" id="cd17928">
    <property type="entry name" value="DEXDc_SecA"/>
    <property type="match status" value="1"/>
</dbReference>
<dbReference type="CDD" id="cd18803">
    <property type="entry name" value="SF2_C_secA"/>
    <property type="match status" value="1"/>
</dbReference>
<dbReference type="FunFam" id="3.40.50.300:FF:000429">
    <property type="entry name" value="Preprotein translocase subunit SecA"/>
    <property type="match status" value="1"/>
</dbReference>
<dbReference type="Gene3D" id="1.10.3060.10">
    <property type="entry name" value="Helical scaffold and wing domains of SecA"/>
    <property type="match status" value="1"/>
</dbReference>
<dbReference type="Gene3D" id="3.40.50.300">
    <property type="entry name" value="P-loop containing nucleotide triphosphate hydrolases"/>
    <property type="match status" value="2"/>
</dbReference>
<dbReference type="Gene3D" id="3.90.1440.10">
    <property type="entry name" value="SecA, preprotein cross-linking domain"/>
    <property type="match status" value="1"/>
</dbReference>
<dbReference type="HAMAP" id="MF_01382">
    <property type="entry name" value="SecA"/>
    <property type="match status" value="1"/>
</dbReference>
<dbReference type="InterPro" id="IPR014001">
    <property type="entry name" value="Helicase_ATP-bd"/>
</dbReference>
<dbReference type="InterPro" id="IPR001650">
    <property type="entry name" value="Helicase_C-like"/>
</dbReference>
<dbReference type="InterPro" id="IPR027417">
    <property type="entry name" value="P-loop_NTPase"/>
</dbReference>
<dbReference type="InterPro" id="IPR000185">
    <property type="entry name" value="SecA"/>
</dbReference>
<dbReference type="InterPro" id="IPR022490">
    <property type="entry name" value="SecA2"/>
</dbReference>
<dbReference type="InterPro" id="IPR011115">
    <property type="entry name" value="SecA_DEAD"/>
</dbReference>
<dbReference type="InterPro" id="IPR014018">
    <property type="entry name" value="SecA_motor_DEAD"/>
</dbReference>
<dbReference type="InterPro" id="IPR011130">
    <property type="entry name" value="SecA_preprotein_X-link_dom"/>
</dbReference>
<dbReference type="InterPro" id="IPR044722">
    <property type="entry name" value="SecA_SF2_C"/>
</dbReference>
<dbReference type="InterPro" id="IPR011116">
    <property type="entry name" value="SecA_Wing/Scaffold"/>
</dbReference>
<dbReference type="InterPro" id="IPR036266">
    <property type="entry name" value="SecA_Wing/Scaffold_sf"/>
</dbReference>
<dbReference type="InterPro" id="IPR036670">
    <property type="entry name" value="SecA_X-link_sf"/>
</dbReference>
<dbReference type="NCBIfam" id="NF006630">
    <property type="entry name" value="PRK09200.1"/>
    <property type="match status" value="1"/>
</dbReference>
<dbReference type="NCBIfam" id="TIGR03714">
    <property type="entry name" value="secA2"/>
    <property type="match status" value="1"/>
</dbReference>
<dbReference type="PANTHER" id="PTHR30612:SF0">
    <property type="entry name" value="CHLOROPLAST PROTEIN-TRANSPORTING ATPASE"/>
    <property type="match status" value="1"/>
</dbReference>
<dbReference type="PANTHER" id="PTHR30612">
    <property type="entry name" value="SECA INNER MEMBRANE COMPONENT OF SEC PROTEIN SECRETION SYSTEM"/>
    <property type="match status" value="1"/>
</dbReference>
<dbReference type="Pfam" id="PF21090">
    <property type="entry name" value="P-loop_SecA"/>
    <property type="match status" value="2"/>
</dbReference>
<dbReference type="Pfam" id="PF07517">
    <property type="entry name" value="SecA_DEAD"/>
    <property type="match status" value="1"/>
</dbReference>
<dbReference type="Pfam" id="PF01043">
    <property type="entry name" value="SecA_PP_bind"/>
    <property type="match status" value="1"/>
</dbReference>
<dbReference type="Pfam" id="PF07516">
    <property type="entry name" value="SecA_SW"/>
    <property type="match status" value="1"/>
</dbReference>
<dbReference type="PRINTS" id="PR00906">
    <property type="entry name" value="SECA"/>
</dbReference>
<dbReference type="SMART" id="SM00957">
    <property type="entry name" value="SecA_DEAD"/>
    <property type="match status" value="1"/>
</dbReference>
<dbReference type="SMART" id="SM00958">
    <property type="entry name" value="SecA_PP_bind"/>
    <property type="match status" value="1"/>
</dbReference>
<dbReference type="SUPFAM" id="SSF81886">
    <property type="entry name" value="Helical scaffold and wing domains of SecA"/>
    <property type="match status" value="1"/>
</dbReference>
<dbReference type="SUPFAM" id="SSF52540">
    <property type="entry name" value="P-loop containing nucleoside triphosphate hydrolases"/>
    <property type="match status" value="2"/>
</dbReference>
<dbReference type="SUPFAM" id="SSF81767">
    <property type="entry name" value="Pre-protein crosslinking domain of SecA"/>
    <property type="match status" value="1"/>
</dbReference>
<dbReference type="PROSITE" id="PS51196">
    <property type="entry name" value="SECA_MOTOR_DEAD"/>
    <property type="match status" value="1"/>
</dbReference>
<gene>
    <name evidence="1" type="primary">secA2</name>
</gene>
<proteinExistence type="inferred from homology"/>
<protein>
    <recommendedName>
        <fullName evidence="1">Protein translocase subunit SecA 2</fullName>
        <ecNumber evidence="1">7.4.2.8</ecNumber>
    </recommendedName>
</protein>
<keyword id="KW-0067">ATP-binding</keyword>
<keyword id="KW-1003">Cell membrane</keyword>
<keyword id="KW-0963">Cytoplasm</keyword>
<keyword id="KW-0472">Membrane</keyword>
<keyword id="KW-0547">Nucleotide-binding</keyword>
<keyword id="KW-0653">Protein transport</keyword>
<keyword id="KW-1278">Translocase</keyword>
<keyword id="KW-0811">Translocation</keyword>
<keyword id="KW-0813">Transport</keyword>
<reference key="1">
    <citation type="journal article" date="2002" name="Mol. Microbiol.">
        <title>An accessory sec locus of Streptococcus gordonii is required for export of the surface protein GspB and for normal levels of binding to human platelets.</title>
        <authorList>
            <person name="Bensing B.A."/>
            <person name="Sullam P.M."/>
        </authorList>
    </citation>
    <scope>NUCLEOTIDE SEQUENCE [GENOMIC DNA]</scope>
    <scope>FUNCTION</scope>
    <scope>DISRUPTION PHENOTYPE</scope>
    <source>
        <strain>M99</strain>
    </source>
</reference>
<reference key="2">
    <citation type="journal article" date="2004" name="J. Bacteriol.">
        <title>The Streptococcus gordonii platelet binding protein GspB undergoes glycosylation independently of export.</title>
        <authorList>
            <person name="Bensing B.A."/>
            <person name="Gibson B.W."/>
            <person name="Sullam P.M."/>
        </authorList>
    </citation>
    <scope>FUNCTION</scope>
    <scope>DISRUPTION PHENOTYPE</scope>
    <source>
        <strain>M99</strain>
    </source>
</reference>
<feature type="chain" id="PRO_0000414187" description="Protein translocase subunit SecA 2">
    <location>
        <begin position="1"/>
        <end position="793"/>
    </location>
</feature>
<feature type="binding site" evidence="1">
    <location>
        <position position="77"/>
    </location>
    <ligand>
        <name>ATP</name>
        <dbReference type="ChEBI" id="CHEBI:30616"/>
    </ligand>
</feature>
<feature type="binding site" evidence="1">
    <location>
        <begin position="95"/>
        <end position="99"/>
    </location>
    <ligand>
        <name>ATP</name>
        <dbReference type="ChEBI" id="CHEBI:30616"/>
    </ligand>
</feature>
<feature type="binding site" evidence="1">
    <location>
        <position position="493"/>
    </location>
    <ligand>
        <name>ATP</name>
        <dbReference type="ChEBI" id="CHEBI:30616"/>
    </ligand>
</feature>
<sequence length="793" mass="91152">MVKNFFHIRRLKKILAKIKSFEKEMSSLSDLDLQKKTDEFKKRLADGENLDQLLPEAYAVVREVDKRILGLFPYDVQVMGAIVLHEGNIAEMATGEGKTLTATMPLYLNALSGQGAMLVTPNSYLALRDAKEMGPVYRFLGLTIETAVRADESKPLETKEKRRIYQADIIYTTNSALGFDYLIENLAENKKNQFLREFNYVIIDEIDSILLDSAQTPLIISGAPRVQSNFYDMMNTLVQTLYEDEDYCYDDEKNEVWLTQKGIRAAESFLGLNHLFSKENQELVRHLNLALRAHMVYKKDQDYVVRQSENEAEVVLLDRATGRLMELTRLQGGQHQAIEAKEHVKLTQETRAMASITYQNLFKLFRKLSGMTGTGKVVESEFLETYSMSVVKIPTNCPVIRRDYPDQIYQTLPEKVFASLDEVKHYHAKGNPLLIFTGSVEMSEIYSSLLLREGIAHNLLNANNVAREAQMIAESGQLGAVTVATSMAGRGTDIKLGPGVADLGGLVVIGTERMENHRIDLQIRGRSGRQGDPGISKFFISLEDDLLKKWGPDWIKNFYRDYSPEDFKNNPILLKQRRFKKLVSKAQKASEGNAKLSRRLTLEYAQSMKIQRELTYAERNRLLEDTNEMEEEINRVIEYVIKQVAYEQSFENRADFYRFILHHFSNRAERIPQEFDIHSPKEVSHLLQAIAEQELLAKKSYLKSDKLYSQFQRLAILKAIDENWVEQVDYLQQLKSALSGFHTSNKKPIVEYYQEAYDGFEYMKERMKHQIVKNLLMSELALNPKGEVVMYFP</sequence>
<name>SECA2_STRGN</name>
<comment type="function">
    <text evidence="2 3">Part of the accessory SecA2/SecY2 system specifically required to export GspB, a serine-rich repeat cell wall protein encoded upstream in the same operon.</text>
</comment>
<comment type="catalytic activity">
    <reaction evidence="1">
        <text>ATP + H2O + cellular proteinSide 1 = ADP + phosphate + cellular proteinSide 2.</text>
        <dbReference type="EC" id="7.4.2.8"/>
    </reaction>
</comment>
<comment type="subunit">
    <text evidence="4">Monomer and homodimer (Potential). Part of the accessory SecA2/SecY2 protein translocation apparatus required to export cell wall protein GspB.</text>
</comment>
<comment type="subcellular location">
    <subcellularLocation>
        <location evidence="1">Cell membrane</location>
        <topology evidence="1">Peripheral membrane protein</topology>
        <orientation evidence="1">Cytoplasmic side</orientation>
    </subcellularLocation>
    <subcellularLocation>
        <location evidence="1">Cytoplasm</location>
    </subcellularLocation>
    <text evidence="1 4">Distribution is 50-50.</text>
</comment>
<comment type="disruption phenotype">
    <text evidence="2 3">Loss of export of cell wall protein GspB; glycosylated GspB accumulates in the cytoplasm.</text>
</comment>
<comment type="similarity">
    <text evidence="1 4">Belongs to the SecA family.</text>
</comment>